<sequence>MPGPSPGLRRALLGLWAALGLGLFGLSAVSQEPFWADLQPRVAFVERGGSLWLNCSTNCPRPERGGLETSLRRNGTQRGLRWLARQLVDIREPETQPVCFFRCARRTLQARGLIRTFQRPDRVELMPLPPWQPVGENFTLSCRVPGAGPRASLTLTLLRGAQELIRRSFAGEPPRARGAVLTATVLARREDHGANFSCRAELDLRPHGLGLFENSSAPRELRTFSLSPDAPRLAAPRLLEVGSERPVSCTLDGLFPASEARVYLALGDQNLSPDVTLEGDAFVATATATASAEQEGARQLVCNVTLGGENRETRENVTIYSFPAPLLTLSEPSVSEGQMVTVTCAAGAQALVTLEGVPAAVPGQPAQLQLNATENDDRRSFFCDATLDVDGETLIKNRSAELRVLYAPRLDDSDCPRSWTWPEGPEQTLRCEARGNPEPSVHCARSDGGAVLALGLLGPVTRALSGTYRCKAANDQGEAVKDVTLTVEYAPALDSVGCPERITWLEGTEASLSCVAHGVPPPDVICVRSGELGAVIEGLLRVAREHAGTYRCEATNPRGSAAKNVAVTVEYGPRFEEPSCPSNWTWVEGSGRLFSCEVDGKPQPSVKCVGSGGATEGVLLPLAPPDPSPRAPRIPRVLAPGIYVCNATNRHGSVAKTVVVSAESPPEMDESTCPSHQTWLEGAEASALACAARGRPSPGVRCSREGIPWPEQQRVSREDAGTYHCVATNAHGTDSRTVTVGVEYRPVVAELAASPPGGVRPGGNFTLTCRAEAWPPAQISWRAPPGALNIGLSSNNSTLSVAGAMGSHGGEYECAATNAHGRHARRITVRVAGPWLWVAVGGAAGGAALLAAGAGLAFYVQSTACKKGEYNVQEAESSGEAVCLNGAGGGAGGAAGAEGGPEAAGGAAESPAEGEVFAIQLTSA</sequence>
<gene>
    <name type="primary">ICAM5</name>
    <name type="synonym">TLCN</name>
    <name type="synonym">TLN</name>
</gene>
<keyword id="KW-0002">3D-structure</keyword>
<keyword id="KW-0130">Cell adhesion</keyword>
<keyword id="KW-1015">Disulfide bond</keyword>
<keyword id="KW-0325">Glycoprotein</keyword>
<keyword id="KW-0393">Immunoglobulin domain</keyword>
<keyword id="KW-0472">Membrane</keyword>
<keyword id="KW-0597">Phosphoprotein</keyword>
<keyword id="KW-1267">Proteomics identification</keyword>
<keyword id="KW-1185">Reference proteome</keyword>
<keyword id="KW-0677">Repeat</keyword>
<keyword id="KW-0732">Signal</keyword>
<keyword id="KW-0812">Transmembrane</keyword>
<keyword id="KW-1133">Transmembrane helix</keyword>
<dbReference type="EMBL" id="U72671">
    <property type="protein sequence ID" value="AAC50959.1"/>
    <property type="molecule type" value="mRNA"/>
</dbReference>
<dbReference type="EMBL" id="AF082802">
    <property type="protein sequence ID" value="AAC97931.1"/>
    <property type="molecule type" value="Genomic_DNA"/>
</dbReference>
<dbReference type="EMBL" id="AC011511">
    <property type="status" value="NOT_ANNOTATED_CDS"/>
    <property type="molecule type" value="Genomic_DNA"/>
</dbReference>
<dbReference type="CCDS" id="CCDS12233.1"/>
<dbReference type="RefSeq" id="NP_003250.3">
    <property type="nucleotide sequence ID" value="NM_003259.3"/>
</dbReference>
<dbReference type="RefSeq" id="XP_011526531.1">
    <property type="nucleotide sequence ID" value="XM_011528229.1"/>
</dbReference>
<dbReference type="RefSeq" id="XP_054177875.1">
    <property type="nucleotide sequence ID" value="XM_054321900.1"/>
</dbReference>
<dbReference type="PDB" id="3BN3">
    <property type="method" value="X-ray"/>
    <property type="resolution" value="2.10 A"/>
    <property type="chains" value="B=32-227"/>
</dbReference>
<dbReference type="PDB" id="4OI9">
    <property type="method" value="X-ray"/>
    <property type="resolution" value="2.50 A"/>
    <property type="chains" value="A=32-409"/>
</dbReference>
<dbReference type="PDB" id="4OIA">
    <property type="method" value="X-ray"/>
    <property type="resolution" value="3.70 A"/>
    <property type="chains" value="A/B=32-409"/>
</dbReference>
<dbReference type="PDB" id="4OIB">
    <property type="method" value="X-ray"/>
    <property type="resolution" value="3.50 A"/>
    <property type="chains" value="A=32-409"/>
</dbReference>
<dbReference type="PDBsum" id="3BN3"/>
<dbReference type="PDBsum" id="4OI9"/>
<dbReference type="PDBsum" id="4OIA"/>
<dbReference type="PDBsum" id="4OIB"/>
<dbReference type="SMR" id="Q9UMF0"/>
<dbReference type="BioGRID" id="112942">
    <property type="interactions" value="67"/>
</dbReference>
<dbReference type="FunCoup" id="Q9UMF0">
    <property type="interactions" value="857"/>
</dbReference>
<dbReference type="IntAct" id="Q9UMF0">
    <property type="interactions" value="72"/>
</dbReference>
<dbReference type="STRING" id="9606.ENSP00000221980"/>
<dbReference type="GlyCosmos" id="Q9UMF0">
    <property type="glycosylation" value="14 sites, No reported glycans"/>
</dbReference>
<dbReference type="GlyGen" id="Q9UMF0">
    <property type="glycosylation" value="16 sites, 2 N-linked glycans (8 sites), 1 O-linked glycan (1 site)"/>
</dbReference>
<dbReference type="iPTMnet" id="Q9UMF0"/>
<dbReference type="PhosphoSitePlus" id="Q9UMF0"/>
<dbReference type="BioMuta" id="ICAM5"/>
<dbReference type="DMDM" id="296439327"/>
<dbReference type="jPOST" id="Q9UMF0"/>
<dbReference type="MassIVE" id="Q9UMF0"/>
<dbReference type="PaxDb" id="9606-ENSP00000221980"/>
<dbReference type="PeptideAtlas" id="Q9UMF0"/>
<dbReference type="ProteomicsDB" id="85189"/>
<dbReference type="Antibodypedia" id="2298">
    <property type="antibodies" value="284 antibodies from 36 providers"/>
</dbReference>
<dbReference type="DNASU" id="7087"/>
<dbReference type="Ensembl" id="ENST00000221980.5">
    <property type="protein sequence ID" value="ENSP00000221980.3"/>
    <property type="gene ID" value="ENSG00000105376.5"/>
</dbReference>
<dbReference type="GeneID" id="7087"/>
<dbReference type="KEGG" id="hsa:7087"/>
<dbReference type="MANE-Select" id="ENST00000221980.5">
    <property type="protein sequence ID" value="ENSP00000221980.3"/>
    <property type="RefSeq nucleotide sequence ID" value="NM_003259.4"/>
    <property type="RefSeq protein sequence ID" value="NP_003250.3"/>
</dbReference>
<dbReference type="UCSC" id="uc002mnu.5">
    <property type="organism name" value="human"/>
</dbReference>
<dbReference type="AGR" id="HGNC:5348"/>
<dbReference type="CTD" id="7087"/>
<dbReference type="DisGeNET" id="7087"/>
<dbReference type="GeneCards" id="ICAM5"/>
<dbReference type="HGNC" id="HGNC:5348">
    <property type="gene designation" value="ICAM5"/>
</dbReference>
<dbReference type="HPA" id="ENSG00000105376">
    <property type="expression patterns" value="Tissue enriched (brain)"/>
</dbReference>
<dbReference type="MIM" id="601852">
    <property type="type" value="gene"/>
</dbReference>
<dbReference type="neXtProt" id="NX_Q9UMF0"/>
<dbReference type="OpenTargets" id="ENSG00000105376"/>
<dbReference type="PharmGKB" id="PA29596"/>
<dbReference type="VEuPathDB" id="HostDB:ENSG00000105376"/>
<dbReference type="eggNOG" id="ENOG502QS16">
    <property type="taxonomic scope" value="Eukaryota"/>
</dbReference>
<dbReference type="GeneTree" id="ENSGT00940000162184"/>
<dbReference type="HOGENOM" id="CLU_014560_0_0_1"/>
<dbReference type="InParanoid" id="Q9UMF0"/>
<dbReference type="OMA" id="GCPSNWT"/>
<dbReference type="OrthoDB" id="6250964at2759"/>
<dbReference type="PAN-GO" id="Q9UMF0">
    <property type="GO annotations" value="3 GO annotations based on evolutionary models"/>
</dbReference>
<dbReference type="PhylomeDB" id="Q9UMF0"/>
<dbReference type="TreeFam" id="TF333745"/>
<dbReference type="PathwayCommons" id="Q9UMF0"/>
<dbReference type="Reactome" id="R-HSA-198933">
    <property type="pathway name" value="Immunoregulatory interactions between a Lymphoid and a non-Lymphoid cell"/>
</dbReference>
<dbReference type="Reactome" id="R-HSA-216083">
    <property type="pathway name" value="Integrin cell surface interactions"/>
</dbReference>
<dbReference type="SignaLink" id="Q9UMF0"/>
<dbReference type="BioGRID-ORCS" id="7087">
    <property type="hits" value="20 hits in 1157 CRISPR screens"/>
</dbReference>
<dbReference type="CD-CODE" id="FB4E32DD">
    <property type="entry name" value="Presynaptic clusters and postsynaptic densities"/>
</dbReference>
<dbReference type="EvolutionaryTrace" id="Q9UMF0"/>
<dbReference type="GeneWiki" id="ICAM5"/>
<dbReference type="GenomeRNAi" id="7087"/>
<dbReference type="Pharos" id="Q9UMF0">
    <property type="development level" value="Tbio"/>
</dbReference>
<dbReference type="PRO" id="PR:Q9UMF0"/>
<dbReference type="Proteomes" id="UP000005640">
    <property type="component" value="Chromosome 19"/>
</dbReference>
<dbReference type="RNAct" id="Q9UMF0">
    <property type="molecule type" value="protein"/>
</dbReference>
<dbReference type="Bgee" id="ENSG00000105376">
    <property type="expression patterns" value="Expressed in right frontal lobe and 97 other cell types or tissues"/>
</dbReference>
<dbReference type="ExpressionAtlas" id="Q9UMF0">
    <property type="expression patterns" value="baseline and differential"/>
</dbReference>
<dbReference type="GO" id="GO:0098978">
    <property type="term" value="C:glutamatergic synapse"/>
    <property type="evidence" value="ECO:0007669"/>
    <property type="project" value="Ensembl"/>
</dbReference>
<dbReference type="GO" id="GO:0005886">
    <property type="term" value="C:plasma membrane"/>
    <property type="evidence" value="ECO:0000318"/>
    <property type="project" value="GO_Central"/>
</dbReference>
<dbReference type="GO" id="GO:0098794">
    <property type="term" value="C:postsynapse"/>
    <property type="evidence" value="ECO:0007669"/>
    <property type="project" value="Ensembl"/>
</dbReference>
<dbReference type="GO" id="GO:0005178">
    <property type="term" value="F:integrin binding"/>
    <property type="evidence" value="ECO:0000318"/>
    <property type="project" value="GO_Central"/>
</dbReference>
<dbReference type="GO" id="GO:0007155">
    <property type="term" value="P:cell adhesion"/>
    <property type="evidence" value="ECO:0000318"/>
    <property type="project" value="GO_Central"/>
</dbReference>
<dbReference type="GO" id="GO:0098609">
    <property type="term" value="P:cell-cell adhesion"/>
    <property type="evidence" value="ECO:0007669"/>
    <property type="project" value="InterPro"/>
</dbReference>
<dbReference type="GO" id="GO:0006909">
    <property type="term" value="P:phagocytosis"/>
    <property type="evidence" value="ECO:0007669"/>
    <property type="project" value="Ensembl"/>
</dbReference>
<dbReference type="GO" id="GO:0051963">
    <property type="term" value="P:regulation of synapse assembly"/>
    <property type="evidence" value="ECO:0007669"/>
    <property type="project" value="Ensembl"/>
</dbReference>
<dbReference type="CDD" id="cd05755">
    <property type="entry name" value="IgC2_2_ICAM-1_like"/>
    <property type="match status" value="1"/>
</dbReference>
<dbReference type="FunFam" id="2.60.40.10:FF:000194">
    <property type="entry name" value="Intercellular adhesion molecule 1"/>
    <property type="match status" value="1"/>
</dbReference>
<dbReference type="FunFam" id="2.60.40.10:FF:000459">
    <property type="entry name" value="Intercellular adhesion molecule 1"/>
    <property type="match status" value="1"/>
</dbReference>
<dbReference type="FunFam" id="2.60.40.10:FF:000648">
    <property type="entry name" value="Intercellular adhesion molecule 1"/>
    <property type="match status" value="1"/>
</dbReference>
<dbReference type="FunFam" id="2.60.40.10:FF:000335">
    <property type="entry name" value="Intercellular adhesion molecule 5"/>
    <property type="match status" value="3"/>
</dbReference>
<dbReference type="FunFam" id="2.60.40.10:FF:000950">
    <property type="entry name" value="Intercellular adhesion molecule 5"/>
    <property type="match status" value="1"/>
</dbReference>
<dbReference type="FunFam" id="2.60.40.10:FF:000338">
    <property type="entry name" value="intercellular adhesion molecule 5"/>
    <property type="match status" value="1"/>
</dbReference>
<dbReference type="Gene3D" id="2.60.40.10">
    <property type="entry name" value="Immunoglobulins"/>
    <property type="match status" value="9"/>
</dbReference>
<dbReference type="InterPro" id="IPR003988">
    <property type="entry name" value="ICAM"/>
</dbReference>
<dbReference type="InterPro" id="IPR048679">
    <property type="entry name" value="ICAM1_3_5_D2"/>
</dbReference>
<dbReference type="InterPro" id="IPR013768">
    <property type="entry name" value="ICAM_N"/>
</dbReference>
<dbReference type="InterPro" id="IPR047012">
    <property type="entry name" value="ICAM_VCAM"/>
</dbReference>
<dbReference type="InterPro" id="IPR003987">
    <property type="entry name" value="ICAM_VCAM_N"/>
</dbReference>
<dbReference type="InterPro" id="IPR007110">
    <property type="entry name" value="Ig-like_dom"/>
</dbReference>
<dbReference type="InterPro" id="IPR036179">
    <property type="entry name" value="Ig-like_dom_sf"/>
</dbReference>
<dbReference type="InterPro" id="IPR013783">
    <property type="entry name" value="Ig-like_fold"/>
</dbReference>
<dbReference type="InterPro" id="IPR003599">
    <property type="entry name" value="Ig_sub"/>
</dbReference>
<dbReference type="InterPro" id="IPR003598">
    <property type="entry name" value="Ig_sub2"/>
</dbReference>
<dbReference type="PANTHER" id="PTHR13771">
    <property type="entry name" value="INTERCELLULAR ADHESION MOLECULE"/>
    <property type="match status" value="1"/>
</dbReference>
<dbReference type="PANTHER" id="PTHR13771:SF9">
    <property type="entry name" value="INTERCELLULAR ADHESION MOLECULE 5"/>
    <property type="match status" value="1"/>
</dbReference>
<dbReference type="Pfam" id="PF21146">
    <property type="entry name" value="ICAM1_3_5_D2"/>
    <property type="match status" value="1"/>
</dbReference>
<dbReference type="Pfam" id="PF03921">
    <property type="entry name" value="ICAM_N"/>
    <property type="match status" value="1"/>
</dbReference>
<dbReference type="Pfam" id="PF13927">
    <property type="entry name" value="Ig_3"/>
    <property type="match status" value="1"/>
</dbReference>
<dbReference type="PRINTS" id="PR01473">
    <property type="entry name" value="ICAM"/>
</dbReference>
<dbReference type="PRINTS" id="PR01472">
    <property type="entry name" value="ICAMVCAM1"/>
</dbReference>
<dbReference type="SMART" id="SM00409">
    <property type="entry name" value="IG"/>
    <property type="match status" value="7"/>
</dbReference>
<dbReference type="SMART" id="SM00408">
    <property type="entry name" value="IGc2"/>
    <property type="match status" value="4"/>
</dbReference>
<dbReference type="SUPFAM" id="SSF48726">
    <property type="entry name" value="Immunoglobulin"/>
    <property type="match status" value="8"/>
</dbReference>
<dbReference type="PROSITE" id="PS50835">
    <property type="entry name" value="IG_LIKE"/>
    <property type="match status" value="4"/>
</dbReference>
<reference key="1">
    <citation type="journal article" date="1997" name="J. Biol. Chem.">
        <title>cDNA cloning and chromosomal localization of the human telencephalin and its distinctive interaction with lymphocyte function-associated antigen-1.</title>
        <authorList>
            <person name="Mizuno T."/>
            <person name="Yoshihara Y."/>
            <person name="Inazawa J."/>
            <person name="Kagamiyama H."/>
            <person name="Mori K."/>
        </authorList>
    </citation>
    <scope>NUCLEOTIDE SEQUENCE [MRNA]</scope>
    <scope>VARIANTS ILE-301 AND THR-348</scope>
    <source>
        <tissue>Brain</tissue>
    </source>
</reference>
<reference key="2">
    <citation type="journal article" date="1998" name="Genomics">
        <title>Mapping of the ICAM-5 (telencephalin) gene, a neuronal member of the ICAM family, to a location between ICAM-1 and ICAM-3 on human chromosome 19p13.2.</title>
        <authorList>
            <person name="Kilgannon P."/>
            <person name="Turner T."/>
            <person name="Meyer J."/>
            <person name="Wisdom W."/>
            <person name="Gallatin W.M."/>
        </authorList>
    </citation>
    <scope>NUCLEOTIDE SEQUENCE [GENOMIC DNA]</scope>
</reference>
<reference key="3">
    <citation type="journal article" date="2004" name="Nature">
        <title>The DNA sequence and biology of human chromosome 19.</title>
        <authorList>
            <person name="Grimwood J."/>
            <person name="Gordon L.A."/>
            <person name="Olsen A.S."/>
            <person name="Terry A."/>
            <person name="Schmutz J."/>
            <person name="Lamerdin J.E."/>
            <person name="Hellsten U."/>
            <person name="Goodstein D."/>
            <person name="Couronne O."/>
            <person name="Tran-Gyamfi M."/>
            <person name="Aerts A."/>
            <person name="Altherr M."/>
            <person name="Ashworth L."/>
            <person name="Bajorek E."/>
            <person name="Black S."/>
            <person name="Branscomb E."/>
            <person name="Caenepeel S."/>
            <person name="Carrano A.V."/>
            <person name="Caoile C."/>
            <person name="Chan Y.M."/>
            <person name="Christensen M."/>
            <person name="Cleland C.A."/>
            <person name="Copeland A."/>
            <person name="Dalin E."/>
            <person name="Dehal P."/>
            <person name="Denys M."/>
            <person name="Detter J.C."/>
            <person name="Escobar J."/>
            <person name="Flowers D."/>
            <person name="Fotopulos D."/>
            <person name="Garcia C."/>
            <person name="Georgescu A.M."/>
            <person name="Glavina T."/>
            <person name="Gomez M."/>
            <person name="Gonzales E."/>
            <person name="Groza M."/>
            <person name="Hammon N."/>
            <person name="Hawkins T."/>
            <person name="Haydu L."/>
            <person name="Ho I."/>
            <person name="Huang W."/>
            <person name="Israni S."/>
            <person name="Jett J."/>
            <person name="Kadner K."/>
            <person name="Kimball H."/>
            <person name="Kobayashi A."/>
            <person name="Larionov V."/>
            <person name="Leem S.-H."/>
            <person name="Lopez F."/>
            <person name="Lou Y."/>
            <person name="Lowry S."/>
            <person name="Malfatti S."/>
            <person name="Martinez D."/>
            <person name="McCready P.M."/>
            <person name="Medina C."/>
            <person name="Morgan J."/>
            <person name="Nelson K."/>
            <person name="Nolan M."/>
            <person name="Ovcharenko I."/>
            <person name="Pitluck S."/>
            <person name="Pollard M."/>
            <person name="Popkie A.P."/>
            <person name="Predki P."/>
            <person name="Quan G."/>
            <person name="Ramirez L."/>
            <person name="Rash S."/>
            <person name="Retterer J."/>
            <person name="Rodriguez A."/>
            <person name="Rogers S."/>
            <person name="Salamov A."/>
            <person name="Salazar A."/>
            <person name="She X."/>
            <person name="Smith D."/>
            <person name="Slezak T."/>
            <person name="Solovyev V."/>
            <person name="Thayer N."/>
            <person name="Tice H."/>
            <person name="Tsai M."/>
            <person name="Ustaszewska A."/>
            <person name="Vo N."/>
            <person name="Wagner M."/>
            <person name="Wheeler J."/>
            <person name="Wu K."/>
            <person name="Xie G."/>
            <person name="Yang J."/>
            <person name="Dubchak I."/>
            <person name="Furey T.S."/>
            <person name="DeJong P."/>
            <person name="Dickson M."/>
            <person name="Gordon D."/>
            <person name="Eichler E.E."/>
            <person name="Pennacchio L.A."/>
            <person name="Richardson P."/>
            <person name="Stubbs L."/>
            <person name="Rokhsar D.S."/>
            <person name="Myers R.M."/>
            <person name="Rubin E.M."/>
            <person name="Lucas S.M."/>
        </authorList>
    </citation>
    <scope>NUCLEOTIDE SEQUENCE [LARGE SCALE GENOMIC DNA]</scope>
</reference>
<reference key="4">
    <citation type="journal article" date="2004" name="Anal. Chem.">
        <title>Robust phosphoproteomic profiling of tyrosine phosphorylation sites from human T cells using immobilized metal affinity chromatography and tandem mass spectrometry.</title>
        <authorList>
            <person name="Brill L.M."/>
            <person name="Salomon A.R."/>
            <person name="Ficarro S.B."/>
            <person name="Mukherji M."/>
            <person name="Stettler-Gill M."/>
            <person name="Peters E.C."/>
        </authorList>
    </citation>
    <scope>PHOSPHORYLATION [LARGE SCALE ANALYSIS] AT THR-182 AND THR-184</scope>
    <scope>IDENTIFICATION BY MASS SPECTROMETRY [LARGE SCALE ANALYSIS]</scope>
    <source>
        <tissue>Leukemic T-cell</tissue>
    </source>
</reference>
<reference key="5">
    <citation type="journal article" date="2008" name="Mol. Cell">
        <title>An unusual allosteric mobility of the C-terminal helix of a high-affinity alphaL integrin I domain variant bound to ICAM-5.</title>
        <authorList>
            <person name="Zhang H."/>
            <person name="Casasnovas J.M."/>
            <person name="Jin M."/>
            <person name="Liu J.H."/>
            <person name="Gahmberg C.G."/>
            <person name="Springer T.A."/>
            <person name="Wang J.H."/>
        </authorList>
    </citation>
    <scope>X-RAY CRYSTALLOGRAPHY (2.1 ANGSTROMS) OF 32-227 IN COMPLEX WITH ITGAL</scope>
    <scope>GLYCOSYLATION AT ASN-54; ASN-74; ASN-137; ASN-195 AND ASN-214</scope>
    <scope>DISULFIDE BONDS</scope>
</reference>
<reference key="6">
    <citation type="journal article" date="2006" name="Science">
        <title>The consensus coding sequences of human breast and colorectal cancers.</title>
        <authorList>
            <person name="Sjoeblom T."/>
            <person name="Jones S."/>
            <person name="Wood L.D."/>
            <person name="Parsons D.W."/>
            <person name="Lin J."/>
            <person name="Barber T.D."/>
            <person name="Mandelker D."/>
            <person name="Leary R.J."/>
            <person name="Ptak J."/>
            <person name="Silliman N."/>
            <person name="Szabo S."/>
            <person name="Buckhaults P."/>
            <person name="Farrell C."/>
            <person name="Meeh P."/>
            <person name="Markowitz S.D."/>
            <person name="Willis J."/>
            <person name="Dawson D."/>
            <person name="Willson J.K.V."/>
            <person name="Gazdar A.F."/>
            <person name="Hartigan J."/>
            <person name="Wu L."/>
            <person name="Liu C."/>
            <person name="Parmigiani G."/>
            <person name="Park B.H."/>
            <person name="Bachman K.E."/>
            <person name="Papadopoulos N."/>
            <person name="Vogelstein B."/>
            <person name="Kinzler K.W."/>
            <person name="Velculescu V.E."/>
        </authorList>
    </citation>
    <scope>VARIANTS [LARGE SCALE ANALYSIS] VAL-140; TRP-188 AND GLN-488</scope>
</reference>
<protein>
    <recommendedName>
        <fullName>Intercellular adhesion molecule 5</fullName>
        <shortName>ICAM-5</shortName>
    </recommendedName>
    <alternativeName>
        <fullName>Telencephalin</fullName>
    </alternativeName>
</protein>
<accession>Q9UMF0</accession>
<accession>Q9Y6F3</accession>
<comment type="function">
    <text>ICAM proteins are ligands for the leukocyte adhesion protein LFA-1 (integrin alpha-L/beta-2).</text>
</comment>
<comment type="interaction">
    <interactant intactId="EBI-6398041">
        <id>Q9UMF0</id>
    </interactant>
    <interactant intactId="EBI-11022349">
        <id>Q99996-3</id>
        <label>AKAP9</label>
    </interactant>
    <organismsDiffer>false</organismsDiffer>
    <experiments>3</experiments>
</comment>
<comment type="interaction">
    <interactant intactId="EBI-6398041">
        <id>Q9UMF0</id>
    </interactant>
    <interactant intactId="EBI-3905054">
        <id>P13196</id>
        <label>ALAS1</label>
    </interactant>
    <organismsDiffer>false</organismsDiffer>
    <experiments>3</experiments>
</comment>
<comment type="interaction">
    <interactant intactId="EBI-6398041">
        <id>Q9UMF0</id>
    </interactant>
    <interactant intactId="EBI-11893530">
        <id>Q9NP70</id>
        <label>AMBN</label>
    </interactant>
    <organismsDiffer>false</organismsDiffer>
    <experiments>3</experiments>
</comment>
<comment type="interaction">
    <interactant intactId="EBI-6398041">
        <id>Q9UMF0</id>
    </interactant>
    <interactant intactId="EBI-77613">
        <id>P05067</id>
        <label>APP</label>
    </interactant>
    <organismsDiffer>false</organismsDiffer>
    <experiments>3</experiments>
</comment>
<comment type="interaction">
    <interactant intactId="EBI-6398041">
        <id>Q9UMF0</id>
    </interactant>
    <interactant intactId="EBI-25843552">
        <id>Q96DX5-3</id>
        <label>ASB9</label>
    </interactant>
    <organismsDiffer>false</organismsDiffer>
    <experiments>3</experiments>
</comment>
<comment type="interaction">
    <interactant intactId="EBI-6398041">
        <id>Q9UMF0</id>
    </interactant>
    <interactant intactId="EBI-9680942">
        <id>Q9HCU0</id>
        <label>CD248</label>
    </interactant>
    <organismsDiffer>false</organismsDiffer>
    <experiments>3</experiments>
</comment>
<comment type="interaction">
    <interactant intactId="EBI-6398041">
        <id>Q9UMF0</id>
    </interactant>
    <interactant intactId="EBI-25836090">
        <id>Q6PJW8-3</id>
        <label>CNST</label>
    </interactant>
    <organismsDiffer>false</organismsDiffer>
    <experiments>3</experiments>
</comment>
<comment type="interaction">
    <interactant intactId="EBI-6398041">
        <id>Q9UMF0</id>
    </interactant>
    <interactant intactId="EBI-2872414">
        <id>Q8IUI8</id>
        <label>CRLF3</label>
    </interactant>
    <organismsDiffer>false</organismsDiffer>
    <experiments>3</experiments>
</comment>
<comment type="interaction">
    <interactant intactId="EBI-6398041">
        <id>Q9UMF0</id>
    </interactant>
    <interactant intactId="EBI-1001144">
        <id>Q9H410</id>
        <label>DSN1</label>
    </interactant>
    <organismsDiffer>false</organismsDiffer>
    <experiments>3</experiments>
</comment>
<comment type="interaction">
    <interactant intactId="EBI-6398041">
        <id>Q9UMF0</id>
    </interactant>
    <interactant intactId="EBI-3893327">
        <id>Q6P1L5</id>
        <label>FAM117B</label>
    </interactant>
    <organismsDiffer>false</organismsDiffer>
    <experiments>3</experiments>
</comment>
<comment type="interaction">
    <interactant intactId="EBI-6398041">
        <id>Q9UMF0</id>
    </interactant>
    <interactant intactId="EBI-25835236">
        <id>Q49AJ0-4</id>
        <label>FAM135B</label>
    </interactant>
    <organismsDiffer>false</organismsDiffer>
    <experiments>3</experiments>
</comment>
<comment type="interaction">
    <interactant intactId="EBI-6398041">
        <id>Q9UMF0</id>
    </interactant>
    <interactant intactId="EBI-2857315">
        <id>Q9BRX5</id>
        <label>GINS3</label>
    </interactant>
    <organismsDiffer>false</organismsDiffer>
    <experiments>3</experiments>
</comment>
<comment type="interaction">
    <interactant intactId="EBI-6398041">
        <id>Q9UMF0</id>
    </interactant>
    <interactant intactId="EBI-7187133">
        <id>P51674</id>
        <label>GPM6A</label>
    </interactant>
    <organismsDiffer>false</organismsDiffer>
    <experiments>3</experiments>
</comment>
<comment type="interaction">
    <interactant intactId="EBI-6398041">
        <id>Q9UMF0</id>
    </interactant>
    <interactant intactId="EBI-2868501">
        <id>Q6NXT2</id>
        <label>H3-5</label>
    </interactant>
    <organismsDiffer>false</organismsDiffer>
    <experiments>3</experiments>
</comment>
<comment type="interaction">
    <interactant intactId="EBI-6398041">
        <id>Q9UMF0</id>
    </interactant>
    <interactant intactId="EBI-2696013">
        <id>Q13887</id>
        <label>KLF5</label>
    </interactant>
    <organismsDiffer>false</organismsDiffer>
    <experiments>3</experiments>
</comment>
<comment type="interaction">
    <interactant intactId="EBI-6398041">
        <id>Q9UMF0</id>
    </interactant>
    <interactant intactId="EBI-6426390">
        <id>Q96NJ5</id>
        <label>KLHL32</label>
    </interactant>
    <organismsDiffer>false</organismsDiffer>
    <experiments>3</experiments>
</comment>
<comment type="interaction">
    <interactant intactId="EBI-6398041">
        <id>Q9UMF0</id>
    </interactant>
    <interactant intactId="EBI-8473062">
        <id>Q8N1A0</id>
        <label>KRT222</label>
    </interactant>
    <organismsDiffer>false</organismsDiffer>
    <experiments>3</experiments>
</comment>
<comment type="interaction">
    <interactant intactId="EBI-6398041">
        <id>Q9UMF0</id>
    </interactant>
    <interactant intactId="EBI-2350424">
        <id>Q9BV99</id>
        <label>LRRC61</label>
    </interactant>
    <organismsDiffer>false</organismsDiffer>
    <experiments>3</experiments>
</comment>
<comment type="interaction">
    <interactant intactId="EBI-6398041">
        <id>Q9UMF0</id>
    </interactant>
    <interactant intactId="EBI-741037">
        <id>Q9BRK4</id>
        <label>LZTS2</label>
    </interactant>
    <organismsDiffer>false</organismsDiffer>
    <experiments>3</experiments>
</comment>
<comment type="interaction">
    <interactant intactId="EBI-6398041">
        <id>Q9UMF0</id>
    </interactant>
    <interactant intactId="EBI-996616">
        <id>P02795</id>
        <label>MT2A</label>
    </interactant>
    <organismsDiffer>false</organismsDiffer>
    <experiments>3</experiments>
</comment>
<comment type="interaction">
    <interactant intactId="EBI-6398041">
        <id>Q9UMF0</id>
    </interactant>
    <interactant intactId="EBI-6952711">
        <id>Q8WY64</id>
        <label>MYLIP</label>
    </interactant>
    <organismsDiffer>false</organismsDiffer>
    <experiments>3</experiments>
</comment>
<comment type="interaction">
    <interactant intactId="EBI-6398041">
        <id>Q9UMF0</id>
    </interactant>
    <interactant intactId="EBI-1058491">
        <id>Q96FW1</id>
        <label>OTUB1</label>
    </interactant>
    <organismsDiffer>false</organismsDiffer>
    <experiments>3</experiments>
</comment>
<comment type="interaction">
    <interactant intactId="EBI-6398041">
        <id>Q9UMF0</id>
    </interactant>
    <interactant intactId="EBI-11984839">
        <id>Q96QF0-7</id>
        <label>RAB3IP</label>
    </interactant>
    <organismsDiffer>false</organismsDiffer>
    <experiments>3</experiments>
</comment>
<comment type="interaction">
    <interactant intactId="EBI-6398041">
        <id>Q9UMF0</id>
    </interactant>
    <interactant intactId="EBI-745810">
        <id>Q96EN9</id>
        <label>REX1BD</label>
    </interactant>
    <organismsDiffer>false</organismsDiffer>
    <experiments>3</experiments>
</comment>
<comment type="interaction">
    <interactant intactId="EBI-6398041">
        <id>Q9UMF0</id>
    </interactant>
    <interactant intactId="EBI-948111">
        <id>Q96EP0</id>
        <label>RNF31</label>
    </interactant>
    <organismsDiffer>false</organismsDiffer>
    <experiments>3</experiments>
</comment>
<comment type="interaction">
    <interactant intactId="EBI-6398041">
        <id>Q9UMF0</id>
    </interactant>
    <interactant intactId="EBI-473249">
        <id>O75528</id>
        <label>TADA3</label>
    </interactant>
    <organismsDiffer>false</organismsDiffer>
    <experiments>3</experiments>
</comment>
<comment type="interaction">
    <interactant intactId="EBI-6398041">
        <id>Q9UMF0</id>
    </interactant>
    <interactant intactId="EBI-354022">
        <id>P45880</id>
        <label>VDAC2</label>
    </interactant>
    <organismsDiffer>false</organismsDiffer>
    <experiments>3</experiments>
</comment>
<comment type="interaction">
    <interactant intactId="EBI-6398041">
        <id>Q9UMF0</id>
    </interactant>
    <interactant intactId="EBI-5847257">
        <id>P05094</id>
        <label>ACTN1</label>
    </interactant>
    <organismsDiffer>true</organismsDiffer>
    <experiments>3</experiments>
</comment>
<comment type="subcellular location">
    <subcellularLocation>
        <location>Membrane</location>
        <topology>Single-pass type I membrane protein</topology>
    </subcellularLocation>
</comment>
<comment type="tissue specificity">
    <text>Expressed on neurons in the most rostral segment of the mammalian brain, the telencephalon.</text>
</comment>
<comment type="PTM">
    <text evidence="1">Glycosylation at Asn-54 is critical for functional folding.</text>
</comment>
<comment type="similarity">
    <text evidence="8">Belongs to the immunoglobulin superfamily. ICAM family.</text>
</comment>
<proteinExistence type="evidence at protein level"/>
<evidence type="ECO:0000250" key="1"/>
<evidence type="ECO:0000255" key="2"/>
<evidence type="ECO:0000255" key="3">
    <source>
        <dbReference type="PROSITE-ProRule" id="PRU00114"/>
    </source>
</evidence>
<evidence type="ECO:0000256" key="4">
    <source>
        <dbReference type="SAM" id="MobiDB-lite"/>
    </source>
</evidence>
<evidence type="ECO:0000269" key="5">
    <source>
    </source>
</evidence>
<evidence type="ECO:0000269" key="6">
    <source>
    </source>
</evidence>
<evidence type="ECO:0000269" key="7">
    <source>
    </source>
</evidence>
<evidence type="ECO:0000305" key="8"/>
<evidence type="ECO:0000305" key="9">
    <source>
    </source>
</evidence>
<evidence type="ECO:0007744" key="10">
    <source>
    </source>
</evidence>
<evidence type="ECO:0007829" key="11">
    <source>
        <dbReference type="PDB" id="3BN3"/>
    </source>
</evidence>
<evidence type="ECO:0007829" key="12">
    <source>
        <dbReference type="PDB" id="4OI9"/>
    </source>
</evidence>
<feature type="signal peptide" evidence="2">
    <location>
        <begin position="1"/>
        <end position="31"/>
    </location>
</feature>
<feature type="chain" id="PRO_0000014799" description="Intercellular adhesion molecule 5">
    <location>
        <begin position="32"/>
        <end position="924"/>
    </location>
</feature>
<feature type="topological domain" description="Extracellular" evidence="2">
    <location>
        <begin position="32"/>
        <end position="835"/>
    </location>
</feature>
<feature type="transmembrane region" description="Helical" evidence="2">
    <location>
        <begin position="836"/>
        <end position="856"/>
    </location>
</feature>
<feature type="topological domain" description="Cytoplasmic" evidence="2">
    <location>
        <begin position="857"/>
        <end position="924"/>
    </location>
</feature>
<feature type="domain" description="Ig-like C2-type 1">
    <location>
        <begin position="48"/>
        <end position="130"/>
    </location>
</feature>
<feature type="domain" description="Ig-like C2-type 2">
    <location>
        <begin position="135"/>
        <end position="235"/>
    </location>
</feature>
<feature type="domain" description="Ig-like C2-type 3">
    <location>
        <begin position="242"/>
        <end position="329"/>
    </location>
</feature>
<feature type="domain" description="Ig-like C2-type 4">
    <location>
        <begin position="337"/>
        <end position="402"/>
    </location>
</feature>
<feature type="domain" description="Ig-like C2-type 5">
    <location>
        <begin position="408"/>
        <end position="486"/>
    </location>
</feature>
<feature type="domain" description="Ig-like C2-type 6">
    <location>
        <begin position="491"/>
        <end position="568"/>
    </location>
</feature>
<feature type="domain" description="Ig-like C2-type 7">
    <location>
        <begin position="573"/>
        <end position="662"/>
    </location>
</feature>
<feature type="domain" description="Ig-like C2-type 8">
    <location>
        <begin position="666"/>
        <end position="739"/>
    </location>
</feature>
<feature type="domain" description="Ig-like C2-type 9">
    <location>
        <begin position="746"/>
        <end position="830"/>
    </location>
</feature>
<feature type="region of interest" description="Disordered" evidence="4">
    <location>
        <begin position="891"/>
        <end position="911"/>
    </location>
</feature>
<feature type="compositionally biased region" description="Gly residues" evidence="4">
    <location>
        <begin position="891"/>
        <end position="903"/>
    </location>
</feature>
<feature type="modified residue" description="Phosphothreonine" evidence="10">
    <location>
        <position position="182"/>
    </location>
</feature>
<feature type="modified residue" description="Phosphothreonine" evidence="10">
    <location>
        <position position="184"/>
    </location>
</feature>
<feature type="glycosylation site" description="N-linked (GlcNAc...) (high mannose) asparagine" evidence="9">
    <location>
        <position position="54"/>
    </location>
</feature>
<feature type="glycosylation site" description="N-linked (GlcNAc...) asparagine" evidence="6">
    <location>
        <position position="74"/>
    </location>
</feature>
<feature type="glycosylation site" description="N-linked (GlcNAc...) asparagine" evidence="6">
    <location>
        <position position="137"/>
    </location>
</feature>
<feature type="glycosylation site" description="N-linked (GlcNAc...) asparagine" evidence="6">
    <location>
        <position position="195"/>
    </location>
</feature>
<feature type="glycosylation site" description="N-linked (GlcNAc...) asparagine" evidence="6">
    <location>
        <position position="214"/>
    </location>
</feature>
<feature type="glycosylation site" description="N-linked (GlcNAc...) asparagine" evidence="2">
    <location>
        <position position="303"/>
    </location>
</feature>
<feature type="glycosylation site" description="N-linked (GlcNAc...) asparagine" evidence="2">
    <location>
        <position position="316"/>
    </location>
</feature>
<feature type="glycosylation site" description="N-linked (GlcNAc...) asparagine" evidence="2">
    <location>
        <position position="371"/>
    </location>
</feature>
<feature type="glycosylation site" description="N-linked (GlcNAc...) asparagine" evidence="2">
    <location>
        <position position="397"/>
    </location>
</feature>
<feature type="glycosylation site" description="N-linked (GlcNAc...) asparagine" evidence="2">
    <location>
        <position position="583"/>
    </location>
</feature>
<feature type="glycosylation site" description="N-linked (GlcNAc...) asparagine" evidence="2">
    <location>
        <position position="646"/>
    </location>
</feature>
<feature type="glycosylation site" description="N-linked (GlcNAc...) asparagine" evidence="2">
    <location>
        <position position="764"/>
    </location>
</feature>
<feature type="glycosylation site" description="N-linked (GlcNAc...) asparagine" evidence="2">
    <location>
        <position position="795"/>
    </location>
</feature>
<feature type="glycosylation site" description="N-linked (GlcNAc...) asparagine" evidence="2">
    <location>
        <position position="796"/>
    </location>
</feature>
<feature type="disulfide bond" evidence="3 6">
    <location>
        <begin position="55"/>
        <end position="99"/>
    </location>
</feature>
<feature type="disulfide bond" evidence="3 6">
    <location>
        <begin position="59"/>
        <end position="103"/>
    </location>
</feature>
<feature type="disulfide bond" evidence="3 6">
    <location>
        <begin position="142"/>
        <end position="198"/>
    </location>
</feature>
<feature type="disulfide bond" evidence="3">
    <location>
        <begin position="249"/>
        <end position="302"/>
    </location>
</feature>
<feature type="disulfide bond" evidence="3">
    <location>
        <begin position="344"/>
        <end position="383"/>
    </location>
</feature>
<feature type="disulfide bond" evidence="3">
    <location>
        <begin position="415"/>
        <end position="470"/>
    </location>
</feature>
<feature type="disulfide bond" evidence="3">
    <location>
        <begin position="498"/>
        <end position="552"/>
    </location>
</feature>
<feature type="disulfide bond" evidence="3">
    <location>
        <begin position="580"/>
        <end position="645"/>
    </location>
</feature>
<feature type="disulfide bond" evidence="3">
    <location>
        <begin position="673"/>
        <end position="725"/>
    </location>
</feature>
<feature type="disulfide bond" evidence="3">
    <location>
        <begin position="769"/>
        <end position="814"/>
    </location>
</feature>
<feature type="sequence variant" id="VAR_035515" description="In a breast cancer sample; somatic mutation." evidence="5">
    <original>L</original>
    <variation>V</variation>
    <location>
        <position position="140"/>
    </location>
</feature>
<feature type="sequence variant" id="VAR_035516" description="In a breast cancer sample; somatic mutation." evidence="5">
    <original>R</original>
    <variation>W</variation>
    <location>
        <position position="188"/>
    </location>
</feature>
<feature type="sequence variant" id="VAR_056046" description="In dbSNP:rs1056538." evidence="7">
    <original>V</original>
    <variation>I</variation>
    <location>
        <position position="301"/>
    </location>
</feature>
<feature type="sequence variant" id="VAR_056047" description="In dbSNP:rs2228615." evidence="7">
    <original>A</original>
    <variation>T</variation>
    <location>
        <position position="348"/>
    </location>
</feature>
<feature type="sequence variant" id="VAR_035517" description="In a breast cancer sample; somatic mutation." evidence="5">
    <original>E</original>
    <variation>Q</variation>
    <location>
        <position position="488"/>
    </location>
</feature>
<feature type="sequence conflict" description="In Ref. 1; AAC50959." evidence="8" ref="1">
    <original>A</original>
    <variation>T</variation>
    <location>
        <position position="614"/>
    </location>
</feature>
<feature type="sequence conflict" description="In Ref. 2; AAC97931." evidence="8" ref="2">
    <original>G</original>
    <variation>R</variation>
    <location>
        <position position="786"/>
    </location>
</feature>
<feature type="sequence conflict" description="In Ref. 1; AAC50959 and 2; AAC97931." evidence="8" ref="1 2">
    <original>A</original>
    <variation>R</variation>
    <location>
        <position position="816"/>
    </location>
</feature>
<feature type="strand" evidence="11">
    <location>
        <begin position="36"/>
        <end position="46"/>
    </location>
</feature>
<feature type="strand" evidence="11">
    <location>
        <begin position="49"/>
        <end position="57"/>
    </location>
</feature>
<feature type="strand" evidence="11">
    <location>
        <begin position="63"/>
        <end position="68"/>
    </location>
</feature>
<feature type="strand" evidence="11">
    <location>
        <begin position="70"/>
        <end position="79"/>
    </location>
</feature>
<feature type="strand" evidence="11">
    <location>
        <begin position="82"/>
        <end position="90"/>
    </location>
</feature>
<feature type="strand" evidence="11">
    <location>
        <begin position="92"/>
        <end position="95"/>
    </location>
</feature>
<feature type="strand" evidence="11">
    <location>
        <begin position="98"/>
        <end position="103"/>
    </location>
</feature>
<feature type="strand" evidence="11">
    <location>
        <begin position="106"/>
        <end position="111"/>
    </location>
</feature>
<feature type="strand" evidence="11">
    <location>
        <begin position="113"/>
        <end position="118"/>
    </location>
</feature>
<feature type="strand" evidence="11">
    <location>
        <begin position="130"/>
        <end position="133"/>
    </location>
</feature>
<feature type="strand" evidence="11">
    <location>
        <begin position="136"/>
        <end position="144"/>
    </location>
</feature>
<feature type="helix" evidence="11">
    <location>
        <begin position="150"/>
        <end position="152"/>
    </location>
</feature>
<feature type="strand" evidence="11">
    <location>
        <begin position="153"/>
        <end position="159"/>
    </location>
</feature>
<feature type="strand" evidence="11">
    <location>
        <begin position="162"/>
        <end position="168"/>
    </location>
</feature>
<feature type="strand" evidence="11">
    <location>
        <begin position="179"/>
        <end position="186"/>
    </location>
</feature>
<feature type="helix" evidence="11">
    <location>
        <begin position="189"/>
        <end position="191"/>
    </location>
</feature>
<feature type="strand" evidence="11">
    <location>
        <begin position="195"/>
        <end position="203"/>
    </location>
</feature>
<feature type="helix" evidence="11">
    <location>
        <begin position="205"/>
        <end position="207"/>
    </location>
</feature>
<feature type="strand" evidence="11">
    <location>
        <begin position="211"/>
        <end position="215"/>
    </location>
</feature>
<feature type="strand" evidence="12">
    <location>
        <begin position="223"/>
        <end position="226"/>
    </location>
</feature>
<feature type="strand" evidence="12">
    <location>
        <begin position="232"/>
        <end position="234"/>
    </location>
</feature>
<feature type="strand" evidence="12">
    <location>
        <begin position="237"/>
        <end position="241"/>
    </location>
</feature>
<feature type="strand" evidence="12">
    <location>
        <begin position="245"/>
        <end position="251"/>
    </location>
</feature>
<feature type="strand" evidence="12">
    <location>
        <begin position="253"/>
        <end position="256"/>
    </location>
</feature>
<feature type="helix" evidence="12">
    <location>
        <begin position="257"/>
        <end position="259"/>
    </location>
</feature>
<feature type="strand" evidence="12">
    <location>
        <begin position="261"/>
        <end position="271"/>
    </location>
</feature>
<feature type="strand" evidence="12">
    <location>
        <begin position="274"/>
        <end position="278"/>
    </location>
</feature>
<feature type="strand" evidence="12">
    <location>
        <begin position="281"/>
        <end position="288"/>
    </location>
</feature>
<feature type="strand" evidence="12">
    <location>
        <begin position="295"/>
        <end position="306"/>
    </location>
</feature>
<feature type="strand" evidence="12">
    <location>
        <begin position="309"/>
        <end position="320"/>
    </location>
</feature>
<feature type="strand" evidence="12">
    <location>
        <begin position="326"/>
        <end position="330"/>
    </location>
</feature>
<feature type="strand" evidence="12">
    <location>
        <begin position="332"/>
        <end position="335"/>
    </location>
</feature>
<feature type="strand" evidence="12">
    <location>
        <begin position="339"/>
        <end position="345"/>
    </location>
</feature>
<feature type="strand" evidence="12">
    <location>
        <begin position="348"/>
        <end position="354"/>
    </location>
</feature>
<feature type="strand" evidence="12">
    <location>
        <begin position="366"/>
        <end position="371"/>
    </location>
</feature>
<feature type="helix" evidence="12">
    <location>
        <begin position="374"/>
        <end position="376"/>
    </location>
</feature>
<feature type="strand" evidence="12">
    <location>
        <begin position="379"/>
        <end position="389"/>
    </location>
</feature>
<feature type="strand" evidence="12">
    <location>
        <begin position="392"/>
        <end position="405"/>
    </location>
</feature>
<organism>
    <name type="scientific">Homo sapiens</name>
    <name type="common">Human</name>
    <dbReference type="NCBI Taxonomy" id="9606"/>
    <lineage>
        <taxon>Eukaryota</taxon>
        <taxon>Metazoa</taxon>
        <taxon>Chordata</taxon>
        <taxon>Craniata</taxon>
        <taxon>Vertebrata</taxon>
        <taxon>Euteleostomi</taxon>
        <taxon>Mammalia</taxon>
        <taxon>Eutheria</taxon>
        <taxon>Euarchontoglires</taxon>
        <taxon>Primates</taxon>
        <taxon>Haplorrhini</taxon>
        <taxon>Catarrhini</taxon>
        <taxon>Hominidae</taxon>
        <taxon>Homo</taxon>
    </lineage>
</organism>
<name>ICAM5_HUMAN</name>